<gene>
    <name evidence="1" type="primary">murE</name>
    <name type="ordered locus">BQ2027_MB2182C</name>
</gene>
<sequence>MSSLARGISRRRTEVATQVEAAPTGLRPNAVVGVRLAALADQVGAALAEGPAQRAVTEDRTVTGVTLRAQDVSPGDLFAALTGSTTHGARHVGDAIARGAVAVLTDPAGVAEIAGRAAVPVLVHPAPRGVLGGLAATVYGHPSERLTVIGITGTSGKTTTTYLVEAGLRAAGRVAGLIGTIGIRVGGADLPSALTTPEAPTLQAMLAAMVERGVDTVVMEVSSHALALGRVDGTRFAVGAFTNLSRDHLDFHPSMADYFEAKASLFDPDSALRARTAVVCIDDDAGRAMAARAADAITVSAADRPAHWRATDVAPTDAGGQQFTAIDPAGVGHHIGIRLPGRYNVANCLVALAILDTVGVSPEQAVPGLREIRVPGRLEQIDRGQGFLALVDYAHKPEALRSVLTTLAHPDRRLAVVFGAGGDRDPGKRAPMGRIAAQLADLVVVTDDNPRDEDPTAIRREILAGAAEVGGDAQVVEIADRRDAIRHAVAWARPGDVVLIAGKGHETGQRGGGRVRPFDDRVELAAALEALERRA</sequence>
<protein>
    <recommendedName>
        <fullName evidence="1">UDP-N-acetylmuramoyl-L-alanyl-D-glutamate--2,6-diaminopimelate ligase</fullName>
        <ecNumber evidence="1">6.3.2.13</ecNumber>
    </recommendedName>
    <alternativeName>
        <fullName evidence="1">Meso-A2pm-adding enzyme</fullName>
    </alternativeName>
    <alternativeName>
        <fullName evidence="1">Meso-diaminopimelate-adding enzyme</fullName>
    </alternativeName>
    <alternativeName>
        <fullName evidence="1">UDP-MurNAc-L-Ala-D-Glu:meso-diaminopimelate ligase</fullName>
    </alternativeName>
    <alternativeName>
        <fullName evidence="1">UDP-MurNAc-tripeptide synthetase</fullName>
    </alternativeName>
    <alternativeName>
        <fullName evidence="1">UDP-N-acetylmuramyl-tripeptide synthetase</fullName>
    </alternativeName>
</protein>
<evidence type="ECO:0000255" key="1">
    <source>
        <dbReference type="HAMAP-Rule" id="MF_00208"/>
    </source>
</evidence>
<dbReference type="EC" id="6.3.2.13" evidence="1"/>
<dbReference type="EMBL" id="LT708304">
    <property type="protein sequence ID" value="SIU00790.1"/>
    <property type="molecule type" value="Genomic_DNA"/>
</dbReference>
<dbReference type="RefSeq" id="NP_855831.1">
    <property type="nucleotide sequence ID" value="NC_002945.3"/>
</dbReference>
<dbReference type="RefSeq" id="WP_003411189.1">
    <property type="nucleotide sequence ID" value="NC_002945.4"/>
</dbReference>
<dbReference type="SMR" id="P65478"/>
<dbReference type="KEGG" id="mbo:BQ2027_MB2182C"/>
<dbReference type="PATRIC" id="fig|233413.5.peg.2398"/>
<dbReference type="UniPathway" id="UPA00219"/>
<dbReference type="Proteomes" id="UP000001419">
    <property type="component" value="Chromosome"/>
</dbReference>
<dbReference type="GO" id="GO:0005737">
    <property type="term" value="C:cytoplasm"/>
    <property type="evidence" value="ECO:0007669"/>
    <property type="project" value="UniProtKB-SubCell"/>
</dbReference>
<dbReference type="GO" id="GO:0005524">
    <property type="term" value="F:ATP binding"/>
    <property type="evidence" value="ECO:0007669"/>
    <property type="project" value="UniProtKB-UniRule"/>
</dbReference>
<dbReference type="GO" id="GO:0000287">
    <property type="term" value="F:magnesium ion binding"/>
    <property type="evidence" value="ECO:0007669"/>
    <property type="project" value="UniProtKB-UniRule"/>
</dbReference>
<dbReference type="GO" id="GO:0008765">
    <property type="term" value="F:UDP-N-acetylmuramoylalanyl-D-glutamate-2,6-diaminopimelate ligase activity"/>
    <property type="evidence" value="ECO:0007669"/>
    <property type="project" value="UniProtKB-UniRule"/>
</dbReference>
<dbReference type="GO" id="GO:0051301">
    <property type="term" value="P:cell division"/>
    <property type="evidence" value="ECO:0007669"/>
    <property type="project" value="UniProtKB-KW"/>
</dbReference>
<dbReference type="GO" id="GO:0071555">
    <property type="term" value="P:cell wall organization"/>
    <property type="evidence" value="ECO:0007669"/>
    <property type="project" value="UniProtKB-KW"/>
</dbReference>
<dbReference type="GO" id="GO:0009252">
    <property type="term" value="P:peptidoglycan biosynthetic process"/>
    <property type="evidence" value="ECO:0007669"/>
    <property type="project" value="UniProtKB-UniRule"/>
</dbReference>
<dbReference type="GO" id="GO:0008360">
    <property type="term" value="P:regulation of cell shape"/>
    <property type="evidence" value="ECO:0007669"/>
    <property type="project" value="UniProtKB-KW"/>
</dbReference>
<dbReference type="FunFam" id="3.90.190.20:FF:000006">
    <property type="entry name" value="UDP-N-acetylmuramoyl-L-alanyl-D-glutamate--2,6-diaminopimelate ligase"/>
    <property type="match status" value="1"/>
</dbReference>
<dbReference type="Gene3D" id="3.90.190.20">
    <property type="entry name" value="Mur ligase, C-terminal domain"/>
    <property type="match status" value="1"/>
</dbReference>
<dbReference type="Gene3D" id="3.40.1190.10">
    <property type="entry name" value="Mur-like, catalytic domain"/>
    <property type="match status" value="1"/>
</dbReference>
<dbReference type="Gene3D" id="3.40.1390.10">
    <property type="entry name" value="MurE/MurF, N-terminal domain"/>
    <property type="match status" value="1"/>
</dbReference>
<dbReference type="HAMAP" id="MF_00208">
    <property type="entry name" value="MurE"/>
    <property type="match status" value="1"/>
</dbReference>
<dbReference type="InterPro" id="IPR036565">
    <property type="entry name" value="Mur-like_cat_sf"/>
</dbReference>
<dbReference type="InterPro" id="IPR004101">
    <property type="entry name" value="Mur_ligase_C"/>
</dbReference>
<dbReference type="InterPro" id="IPR036615">
    <property type="entry name" value="Mur_ligase_C_dom_sf"/>
</dbReference>
<dbReference type="InterPro" id="IPR013221">
    <property type="entry name" value="Mur_ligase_cen"/>
</dbReference>
<dbReference type="InterPro" id="IPR000713">
    <property type="entry name" value="Mur_ligase_N"/>
</dbReference>
<dbReference type="InterPro" id="IPR035911">
    <property type="entry name" value="MurE/MurF_N"/>
</dbReference>
<dbReference type="InterPro" id="IPR005761">
    <property type="entry name" value="UDP-N-AcMur-Glu-dNH2Pim_ligase"/>
</dbReference>
<dbReference type="NCBIfam" id="TIGR01085">
    <property type="entry name" value="murE"/>
    <property type="match status" value="1"/>
</dbReference>
<dbReference type="NCBIfam" id="NF001124">
    <property type="entry name" value="PRK00139.1-2"/>
    <property type="match status" value="1"/>
</dbReference>
<dbReference type="NCBIfam" id="NF001126">
    <property type="entry name" value="PRK00139.1-4"/>
    <property type="match status" value="1"/>
</dbReference>
<dbReference type="PANTHER" id="PTHR23135">
    <property type="entry name" value="MUR LIGASE FAMILY MEMBER"/>
    <property type="match status" value="1"/>
</dbReference>
<dbReference type="PANTHER" id="PTHR23135:SF4">
    <property type="entry name" value="UDP-N-ACETYLMURAMOYL-L-ALANYL-D-GLUTAMATE--2,6-DIAMINOPIMELATE LIGASE MURE HOMOLOG, CHLOROPLASTIC"/>
    <property type="match status" value="1"/>
</dbReference>
<dbReference type="Pfam" id="PF01225">
    <property type="entry name" value="Mur_ligase"/>
    <property type="match status" value="1"/>
</dbReference>
<dbReference type="Pfam" id="PF02875">
    <property type="entry name" value="Mur_ligase_C"/>
    <property type="match status" value="1"/>
</dbReference>
<dbReference type="Pfam" id="PF08245">
    <property type="entry name" value="Mur_ligase_M"/>
    <property type="match status" value="1"/>
</dbReference>
<dbReference type="SUPFAM" id="SSF53623">
    <property type="entry name" value="MurD-like peptide ligases, catalytic domain"/>
    <property type="match status" value="1"/>
</dbReference>
<dbReference type="SUPFAM" id="SSF53244">
    <property type="entry name" value="MurD-like peptide ligases, peptide-binding domain"/>
    <property type="match status" value="1"/>
</dbReference>
<dbReference type="SUPFAM" id="SSF63418">
    <property type="entry name" value="MurE/MurF N-terminal domain"/>
    <property type="match status" value="1"/>
</dbReference>
<organism>
    <name type="scientific">Mycobacterium bovis (strain ATCC BAA-935 / AF2122/97)</name>
    <dbReference type="NCBI Taxonomy" id="233413"/>
    <lineage>
        <taxon>Bacteria</taxon>
        <taxon>Bacillati</taxon>
        <taxon>Actinomycetota</taxon>
        <taxon>Actinomycetes</taxon>
        <taxon>Mycobacteriales</taxon>
        <taxon>Mycobacteriaceae</taxon>
        <taxon>Mycobacterium</taxon>
        <taxon>Mycobacterium tuberculosis complex</taxon>
    </lineage>
</organism>
<accession>P65478</accession>
<accession>A0A1R3Y0G2</accession>
<accession>O06219</accession>
<accession>X2BK97</accession>
<feature type="chain" id="PRO_0000101914" description="UDP-N-acetylmuramoyl-L-alanyl-D-glutamate--2,6-diaminopimelate ligase">
    <location>
        <begin position="1"/>
        <end position="535"/>
    </location>
</feature>
<feature type="short sequence motif" description="Meso-diaminopimelate recognition motif">
    <location>
        <begin position="448"/>
        <end position="451"/>
    </location>
</feature>
<feature type="binding site" evidence="1">
    <location>
        <position position="67"/>
    </location>
    <ligand>
        <name>UDP-N-acetyl-alpha-D-muramoyl-L-alanyl-D-glutamate</name>
        <dbReference type="ChEBI" id="CHEBI:83900"/>
    </ligand>
</feature>
<feature type="binding site" evidence="1">
    <location>
        <begin position="153"/>
        <end position="159"/>
    </location>
    <ligand>
        <name>ATP</name>
        <dbReference type="ChEBI" id="CHEBI:30616"/>
    </ligand>
</feature>
<feature type="binding site" evidence="1">
    <location>
        <begin position="195"/>
        <end position="196"/>
    </location>
    <ligand>
        <name>UDP-N-acetyl-alpha-D-muramoyl-L-alanyl-D-glutamate</name>
        <dbReference type="ChEBI" id="CHEBI:83900"/>
    </ligand>
</feature>
<feature type="binding site" evidence="1">
    <location>
        <position position="222"/>
    </location>
    <ligand>
        <name>UDP-N-acetyl-alpha-D-muramoyl-L-alanyl-D-glutamate</name>
        <dbReference type="ChEBI" id="CHEBI:83900"/>
    </ligand>
</feature>
<feature type="binding site" evidence="1">
    <location>
        <position position="230"/>
    </location>
    <ligand>
        <name>UDP-N-acetyl-alpha-D-muramoyl-L-alanyl-D-glutamate</name>
        <dbReference type="ChEBI" id="CHEBI:83900"/>
    </ligand>
</feature>
<feature type="binding site" evidence="1">
    <location>
        <position position="424"/>
    </location>
    <ligand>
        <name>meso-2,6-diaminopimelate</name>
        <dbReference type="ChEBI" id="CHEBI:57791"/>
    </ligand>
</feature>
<feature type="binding site" evidence="1">
    <location>
        <begin position="448"/>
        <end position="451"/>
    </location>
    <ligand>
        <name>meso-2,6-diaminopimelate</name>
        <dbReference type="ChEBI" id="CHEBI:57791"/>
    </ligand>
</feature>
<feature type="binding site" evidence="1">
    <location>
        <position position="502"/>
    </location>
    <ligand>
        <name>meso-2,6-diaminopimelate</name>
        <dbReference type="ChEBI" id="CHEBI:57791"/>
    </ligand>
</feature>
<feature type="binding site" evidence="1">
    <location>
        <position position="506"/>
    </location>
    <ligand>
        <name>meso-2,6-diaminopimelate</name>
        <dbReference type="ChEBI" id="CHEBI:57791"/>
    </ligand>
</feature>
<feature type="modified residue" description="N6-carboxylysine" evidence="1">
    <location>
        <position position="262"/>
    </location>
</feature>
<name>MURE_MYCBO</name>
<keyword id="KW-0067">ATP-binding</keyword>
<keyword id="KW-0131">Cell cycle</keyword>
<keyword id="KW-0132">Cell division</keyword>
<keyword id="KW-0133">Cell shape</keyword>
<keyword id="KW-0961">Cell wall biogenesis/degradation</keyword>
<keyword id="KW-0963">Cytoplasm</keyword>
<keyword id="KW-0436">Ligase</keyword>
<keyword id="KW-0460">Magnesium</keyword>
<keyword id="KW-0547">Nucleotide-binding</keyword>
<keyword id="KW-0573">Peptidoglycan synthesis</keyword>
<keyword id="KW-1185">Reference proteome</keyword>
<reference key="1">
    <citation type="journal article" date="2003" name="Proc. Natl. Acad. Sci. U.S.A.">
        <title>The complete genome sequence of Mycobacterium bovis.</title>
        <authorList>
            <person name="Garnier T."/>
            <person name="Eiglmeier K."/>
            <person name="Camus J.-C."/>
            <person name="Medina N."/>
            <person name="Mansoor H."/>
            <person name="Pryor M."/>
            <person name="Duthoy S."/>
            <person name="Grondin S."/>
            <person name="Lacroix C."/>
            <person name="Monsempe C."/>
            <person name="Simon S."/>
            <person name="Harris B."/>
            <person name="Atkin R."/>
            <person name="Doggett J."/>
            <person name="Mayes R."/>
            <person name="Keating L."/>
            <person name="Wheeler P.R."/>
            <person name="Parkhill J."/>
            <person name="Barrell B.G."/>
            <person name="Cole S.T."/>
            <person name="Gordon S.V."/>
            <person name="Hewinson R.G."/>
        </authorList>
    </citation>
    <scope>NUCLEOTIDE SEQUENCE [LARGE SCALE GENOMIC DNA]</scope>
    <source>
        <strain>ATCC BAA-935 / AF2122/97</strain>
    </source>
</reference>
<reference key="2">
    <citation type="journal article" date="2017" name="Genome Announc.">
        <title>Updated reference genome sequence and annotation of Mycobacterium bovis AF2122/97.</title>
        <authorList>
            <person name="Malone K.M."/>
            <person name="Farrell D."/>
            <person name="Stuber T.P."/>
            <person name="Schubert O.T."/>
            <person name="Aebersold R."/>
            <person name="Robbe-Austerman S."/>
            <person name="Gordon S.V."/>
        </authorList>
    </citation>
    <scope>NUCLEOTIDE SEQUENCE [LARGE SCALE GENOMIC DNA]</scope>
    <scope>GENOME REANNOTATION</scope>
    <source>
        <strain>ATCC BAA-935 / AF2122/97</strain>
    </source>
</reference>
<proteinExistence type="inferred from homology"/>
<comment type="function">
    <text evidence="1">Catalyzes the addition of meso-diaminopimelic acid to the nucleotide precursor UDP-N-acetylmuramoyl-L-alanyl-D-glutamate (UMAG) in the biosynthesis of bacterial cell-wall peptidoglycan.</text>
</comment>
<comment type="catalytic activity">
    <reaction evidence="1">
        <text>UDP-N-acetyl-alpha-D-muramoyl-L-alanyl-D-glutamate + meso-2,6-diaminopimelate + ATP = UDP-N-acetyl-alpha-D-muramoyl-L-alanyl-gamma-D-glutamyl-meso-2,6-diaminopimelate + ADP + phosphate + H(+)</text>
        <dbReference type="Rhea" id="RHEA:23676"/>
        <dbReference type="ChEBI" id="CHEBI:15378"/>
        <dbReference type="ChEBI" id="CHEBI:30616"/>
        <dbReference type="ChEBI" id="CHEBI:43474"/>
        <dbReference type="ChEBI" id="CHEBI:57791"/>
        <dbReference type="ChEBI" id="CHEBI:83900"/>
        <dbReference type="ChEBI" id="CHEBI:83905"/>
        <dbReference type="ChEBI" id="CHEBI:456216"/>
        <dbReference type="EC" id="6.3.2.13"/>
    </reaction>
</comment>
<comment type="cofactor">
    <cofactor evidence="1">
        <name>Mg(2+)</name>
        <dbReference type="ChEBI" id="CHEBI:18420"/>
    </cofactor>
</comment>
<comment type="pathway">
    <text evidence="1">Cell wall biogenesis; peptidoglycan biosynthesis.</text>
</comment>
<comment type="subcellular location">
    <subcellularLocation>
        <location evidence="1">Cytoplasm</location>
    </subcellularLocation>
</comment>
<comment type="PTM">
    <text evidence="1">Carboxylation is probably crucial for Mg(2+) binding and, consequently, for the gamma-phosphate positioning of ATP.</text>
</comment>
<comment type="similarity">
    <text evidence="1">Belongs to the MurCDEF family. MurE subfamily.</text>
</comment>